<gene>
    <name evidence="1" type="primary">smpB</name>
    <name type="ordered locus">CBO0234</name>
    <name type="ordered locus">CLC_0290</name>
</gene>
<name>SSRP_CLOBH</name>
<accession>A5HYC7</accession>
<accession>A7G0D5</accession>
<reference key="1">
    <citation type="journal article" date="2007" name="Genome Res.">
        <title>Genome sequence of a proteolytic (Group I) Clostridium botulinum strain Hall A and comparative analysis of the clostridial genomes.</title>
        <authorList>
            <person name="Sebaihia M."/>
            <person name="Peck M.W."/>
            <person name="Minton N.P."/>
            <person name="Thomson N.R."/>
            <person name="Holden M.T.G."/>
            <person name="Mitchell W.J."/>
            <person name="Carter A.T."/>
            <person name="Bentley S.D."/>
            <person name="Mason D.R."/>
            <person name="Crossman L."/>
            <person name="Paul C.J."/>
            <person name="Ivens A."/>
            <person name="Wells-Bennik M.H.J."/>
            <person name="Davis I.J."/>
            <person name="Cerdeno-Tarraga A.M."/>
            <person name="Churcher C."/>
            <person name="Quail M.A."/>
            <person name="Chillingworth T."/>
            <person name="Feltwell T."/>
            <person name="Fraser A."/>
            <person name="Goodhead I."/>
            <person name="Hance Z."/>
            <person name="Jagels K."/>
            <person name="Larke N."/>
            <person name="Maddison M."/>
            <person name="Moule S."/>
            <person name="Mungall K."/>
            <person name="Norbertczak H."/>
            <person name="Rabbinowitsch E."/>
            <person name="Sanders M."/>
            <person name="Simmonds M."/>
            <person name="White B."/>
            <person name="Whithead S."/>
            <person name="Parkhill J."/>
        </authorList>
    </citation>
    <scope>NUCLEOTIDE SEQUENCE [LARGE SCALE GENOMIC DNA]</scope>
    <source>
        <strain>Hall / ATCC 3502 / NCTC 13319 / Type A</strain>
    </source>
</reference>
<reference key="2">
    <citation type="journal article" date="2007" name="PLoS ONE">
        <title>Analysis of the neurotoxin complex genes in Clostridium botulinum A1-A4 and B1 strains: BoNT/A3, /Ba4 and /B1 clusters are located within plasmids.</title>
        <authorList>
            <person name="Smith T.J."/>
            <person name="Hill K.K."/>
            <person name="Foley B.T."/>
            <person name="Detter J.C."/>
            <person name="Munk A.C."/>
            <person name="Bruce D.C."/>
            <person name="Doggett N.A."/>
            <person name="Smith L.A."/>
            <person name="Marks J.D."/>
            <person name="Xie G."/>
            <person name="Brettin T.S."/>
        </authorList>
    </citation>
    <scope>NUCLEOTIDE SEQUENCE [LARGE SCALE GENOMIC DNA]</scope>
    <source>
        <strain>Hall / ATCC 3502 / NCTC 13319 / Type A</strain>
    </source>
</reference>
<dbReference type="EMBL" id="CP000727">
    <property type="protein sequence ID" value="ABS36342.1"/>
    <property type="molecule type" value="Genomic_DNA"/>
</dbReference>
<dbReference type="EMBL" id="AM412317">
    <property type="protein sequence ID" value="CAL81786.1"/>
    <property type="molecule type" value="Genomic_DNA"/>
</dbReference>
<dbReference type="RefSeq" id="WP_003356515.1">
    <property type="nucleotide sequence ID" value="NC_009698.1"/>
</dbReference>
<dbReference type="RefSeq" id="YP_001252778.1">
    <property type="nucleotide sequence ID" value="NC_009495.1"/>
</dbReference>
<dbReference type="RefSeq" id="YP_001386190.1">
    <property type="nucleotide sequence ID" value="NC_009698.1"/>
</dbReference>
<dbReference type="SMR" id="A5HYC7"/>
<dbReference type="GeneID" id="5184489"/>
<dbReference type="KEGG" id="cbh:CLC_0290"/>
<dbReference type="KEGG" id="cbo:CBO0234"/>
<dbReference type="PATRIC" id="fig|413999.7.peg.232"/>
<dbReference type="HOGENOM" id="CLU_108953_0_0_9"/>
<dbReference type="PRO" id="PR:A5HYC7"/>
<dbReference type="Proteomes" id="UP000001986">
    <property type="component" value="Chromosome"/>
</dbReference>
<dbReference type="GO" id="GO:0005829">
    <property type="term" value="C:cytosol"/>
    <property type="evidence" value="ECO:0000318"/>
    <property type="project" value="GO_Central"/>
</dbReference>
<dbReference type="GO" id="GO:0003723">
    <property type="term" value="F:RNA binding"/>
    <property type="evidence" value="ECO:0000318"/>
    <property type="project" value="GO_Central"/>
</dbReference>
<dbReference type="GO" id="GO:0070929">
    <property type="term" value="P:trans-translation"/>
    <property type="evidence" value="ECO:0007669"/>
    <property type="project" value="UniProtKB-UniRule"/>
</dbReference>
<dbReference type="CDD" id="cd09294">
    <property type="entry name" value="SmpB"/>
    <property type="match status" value="1"/>
</dbReference>
<dbReference type="Gene3D" id="2.40.280.10">
    <property type="match status" value="1"/>
</dbReference>
<dbReference type="HAMAP" id="MF_00023">
    <property type="entry name" value="SmpB"/>
    <property type="match status" value="1"/>
</dbReference>
<dbReference type="InterPro" id="IPR023620">
    <property type="entry name" value="SmpB"/>
</dbReference>
<dbReference type="InterPro" id="IPR000037">
    <property type="entry name" value="SsrA-bd_prot"/>
</dbReference>
<dbReference type="InterPro" id="IPR020081">
    <property type="entry name" value="SsrA-bd_prot_CS"/>
</dbReference>
<dbReference type="NCBIfam" id="NF003843">
    <property type="entry name" value="PRK05422.1"/>
    <property type="match status" value="1"/>
</dbReference>
<dbReference type="NCBIfam" id="TIGR00086">
    <property type="entry name" value="smpB"/>
    <property type="match status" value="1"/>
</dbReference>
<dbReference type="PANTHER" id="PTHR30308:SF2">
    <property type="entry name" value="SSRA-BINDING PROTEIN"/>
    <property type="match status" value="1"/>
</dbReference>
<dbReference type="PANTHER" id="PTHR30308">
    <property type="entry name" value="TMRNA-BINDING COMPONENT OF TRANS-TRANSLATION TAGGING COMPLEX"/>
    <property type="match status" value="1"/>
</dbReference>
<dbReference type="Pfam" id="PF01668">
    <property type="entry name" value="SmpB"/>
    <property type="match status" value="1"/>
</dbReference>
<dbReference type="SUPFAM" id="SSF74982">
    <property type="entry name" value="Small protein B (SmpB)"/>
    <property type="match status" value="1"/>
</dbReference>
<dbReference type="PROSITE" id="PS01317">
    <property type="entry name" value="SSRP"/>
    <property type="match status" value="1"/>
</dbReference>
<comment type="function">
    <text evidence="1">Required for rescue of stalled ribosomes mediated by trans-translation. Binds to transfer-messenger RNA (tmRNA), required for stable association of tmRNA with ribosomes. tmRNA and SmpB together mimic tRNA shape, replacing the anticodon stem-loop with SmpB. tmRNA is encoded by the ssrA gene; the 2 termini fold to resemble tRNA(Ala) and it encodes a 'tag peptide', a short internal open reading frame. During trans-translation Ala-aminoacylated tmRNA acts like a tRNA, entering the A-site of stalled ribosomes, displacing the stalled mRNA. The ribosome then switches to translate the ORF on the tmRNA; the nascent peptide is terminated with the 'tag peptide' encoded by the tmRNA and targeted for degradation. The ribosome is freed to recommence translation, which seems to be the essential function of trans-translation.</text>
</comment>
<comment type="subcellular location">
    <subcellularLocation>
        <location evidence="1">Cytoplasm</location>
    </subcellularLocation>
    <text evidence="1">The tmRNA-SmpB complex associates with stalled 70S ribosomes.</text>
</comment>
<comment type="similarity">
    <text evidence="1">Belongs to the SmpB family.</text>
</comment>
<feature type="chain" id="PRO_1000002035" description="SsrA-binding protein">
    <location>
        <begin position="1"/>
        <end position="156"/>
    </location>
</feature>
<evidence type="ECO:0000255" key="1">
    <source>
        <dbReference type="HAMAP-Rule" id="MF_00023"/>
    </source>
</evidence>
<organism>
    <name type="scientific">Clostridium botulinum (strain Hall / ATCC 3502 / NCTC 13319 / Type A)</name>
    <dbReference type="NCBI Taxonomy" id="441771"/>
    <lineage>
        <taxon>Bacteria</taxon>
        <taxon>Bacillati</taxon>
        <taxon>Bacillota</taxon>
        <taxon>Clostridia</taxon>
        <taxon>Eubacteriales</taxon>
        <taxon>Clostridiaceae</taxon>
        <taxon>Clostridium</taxon>
    </lineage>
</organism>
<protein>
    <recommendedName>
        <fullName evidence="1">SsrA-binding protein</fullName>
    </recommendedName>
    <alternativeName>
        <fullName evidence="1">Small protein B</fullName>
    </alternativeName>
</protein>
<sequence>MSKKKGSNTLAENRKARHDYFIEETYEAGIELVGTEVKSIRQGKANLKDSYAEIRNGEVFVRNMHISPYEQGNIYNKDPLRDRKLLLHKSEIYKLVGFTTQQGYTLIPLSLYLKHGRVKVSLAVAKGKKNYDKRDAMLEKAAKREMDRQIKERSRY</sequence>
<proteinExistence type="inferred from homology"/>
<keyword id="KW-0963">Cytoplasm</keyword>
<keyword id="KW-1185">Reference proteome</keyword>
<keyword id="KW-0694">RNA-binding</keyword>